<name>FOLD_GEOUR</name>
<feature type="chain" id="PRO_1000087903" description="Bifunctional protein FolD">
    <location>
        <begin position="1"/>
        <end position="280"/>
    </location>
</feature>
<feature type="binding site" evidence="1">
    <location>
        <begin position="164"/>
        <end position="166"/>
    </location>
    <ligand>
        <name>NADP(+)</name>
        <dbReference type="ChEBI" id="CHEBI:58349"/>
    </ligand>
</feature>
<feature type="binding site" evidence="1">
    <location>
        <position position="189"/>
    </location>
    <ligand>
        <name>NADP(+)</name>
        <dbReference type="ChEBI" id="CHEBI:58349"/>
    </ligand>
</feature>
<feature type="binding site" evidence="1">
    <location>
        <position position="230"/>
    </location>
    <ligand>
        <name>NADP(+)</name>
        <dbReference type="ChEBI" id="CHEBI:58349"/>
    </ligand>
</feature>
<sequence>MAKIIDGKAIAAKIRGEITAEVAKLASKGVTPGLAVVLVGEDPASKVYVSMKEKACKDVGIFSDEYKLPVDTSEADLLLLIHKLNSDPKIHGILIQLPLPKQIDTEKVLEAISPEKDADGFHPYNVGRLVIGKPLFQPCTPYGVMVMLKEAGVELAGKEVVVVGRSNIVGKPVAFMCLQQNATVTLCHSKTRDLAAKVGMADVVIAAVGQPEMIKGAWIKEGAVVIDVGVNRVGEKKLVGDVEFDAAAERASAITPVPGGVGPMTITMLLYNTLEAAKRR</sequence>
<organism>
    <name type="scientific">Geotalea uraniireducens (strain Rf4)</name>
    <name type="common">Geobacter uraniireducens</name>
    <dbReference type="NCBI Taxonomy" id="351605"/>
    <lineage>
        <taxon>Bacteria</taxon>
        <taxon>Pseudomonadati</taxon>
        <taxon>Thermodesulfobacteriota</taxon>
        <taxon>Desulfuromonadia</taxon>
        <taxon>Geobacterales</taxon>
        <taxon>Geobacteraceae</taxon>
        <taxon>Geotalea</taxon>
    </lineage>
</organism>
<proteinExistence type="inferred from homology"/>
<keyword id="KW-0028">Amino-acid biosynthesis</keyword>
<keyword id="KW-0368">Histidine biosynthesis</keyword>
<keyword id="KW-0378">Hydrolase</keyword>
<keyword id="KW-0486">Methionine biosynthesis</keyword>
<keyword id="KW-0511">Multifunctional enzyme</keyword>
<keyword id="KW-0521">NADP</keyword>
<keyword id="KW-0554">One-carbon metabolism</keyword>
<keyword id="KW-0560">Oxidoreductase</keyword>
<keyword id="KW-0658">Purine biosynthesis</keyword>
<keyword id="KW-1185">Reference proteome</keyword>
<gene>
    <name evidence="1" type="primary">folD</name>
    <name type="ordered locus">Gura_1169</name>
</gene>
<comment type="function">
    <text evidence="1">Catalyzes the oxidation of 5,10-methylenetetrahydrofolate to 5,10-methenyltetrahydrofolate and then the hydrolysis of 5,10-methenyltetrahydrofolate to 10-formyltetrahydrofolate.</text>
</comment>
<comment type="catalytic activity">
    <reaction evidence="1">
        <text>(6R)-5,10-methylene-5,6,7,8-tetrahydrofolate + NADP(+) = (6R)-5,10-methenyltetrahydrofolate + NADPH</text>
        <dbReference type="Rhea" id="RHEA:22812"/>
        <dbReference type="ChEBI" id="CHEBI:15636"/>
        <dbReference type="ChEBI" id="CHEBI:57455"/>
        <dbReference type="ChEBI" id="CHEBI:57783"/>
        <dbReference type="ChEBI" id="CHEBI:58349"/>
        <dbReference type="EC" id="1.5.1.5"/>
    </reaction>
</comment>
<comment type="catalytic activity">
    <reaction evidence="1">
        <text>(6R)-5,10-methenyltetrahydrofolate + H2O = (6R)-10-formyltetrahydrofolate + H(+)</text>
        <dbReference type="Rhea" id="RHEA:23700"/>
        <dbReference type="ChEBI" id="CHEBI:15377"/>
        <dbReference type="ChEBI" id="CHEBI:15378"/>
        <dbReference type="ChEBI" id="CHEBI:57455"/>
        <dbReference type="ChEBI" id="CHEBI:195366"/>
        <dbReference type="EC" id="3.5.4.9"/>
    </reaction>
</comment>
<comment type="pathway">
    <text evidence="1">One-carbon metabolism; tetrahydrofolate interconversion.</text>
</comment>
<comment type="subunit">
    <text evidence="1">Homodimer.</text>
</comment>
<comment type="similarity">
    <text evidence="1">Belongs to the tetrahydrofolate dehydrogenase/cyclohydrolase family.</text>
</comment>
<protein>
    <recommendedName>
        <fullName evidence="1">Bifunctional protein FolD</fullName>
    </recommendedName>
    <domain>
        <recommendedName>
            <fullName evidence="1">Methylenetetrahydrofolate dehydrogenase</fullName>
            <ecNumber evidence="1">1.5.1.5</ecNumber>
        </recommendedName>
    </domain>
    <domain>
        <recommendedName>
            <fullName evidence="1">Methenyltetrahydrofolate cyclohydrolase</fullName>
            <ecNumber evidence="1">3.5.4.9</ecNumber>
        </recommendedName>
    </domain>
</protein>
<evidence type="ECO:0000255" key="1">
    <source>
        <dbReference type="HAMAP-Rule" id="MF_01576"/>
    </source>
</evidence>
<dbReference type="EC" id="1.5.1.5" evidence="1"/>
<dbReference type="EC" id="3.5.4.9" evidence="1"/>
<dbReference type="EMBL" id="CP000698">
    <property type="protein sequence ID" value="ABQ25373.1"/>
    <property type="molecule type" value="Genomic_DNA"/>
</dbReference>
<dbReference type="RefSeq" id="WP_011938095.1">
    <property type="nucleotide sequence ID" value="NC_009483.1"/>
</dbReference>
<dbReference type="SMR" id="A5GAM5"/>
<dbReference type="STRING" id="351605.Gura_1169"/>
<dbReference type="KEGG" id="gur:Gura_1169"/>
<dbReference type="HOGENOM" id="CLU_034045_2_1_7"/>
<dbReference type="OrthoDB" id="9803580at2"/>
<dbReference type="UniPathway" id="UPA00193"/>
<dbReference type="Proteomes" id="UP000006695">
    <property type="component" value="Chromosome"/>
</dbReference>
<dbReference type="GO" id="GO:0005829">
    <property type="term" value="C:cytosol"/>
    <property type="evidence" value="ECO:0007669"/>
    <property type="project" value="TreeGrafter"/>
</dbReference>
<dbReference type="GO" id="GO:0004477">
    <property type="term" value="F:methenyltetrahydrofolate cyclohydrolase activity"/>
    <property type="evidence" value="ECO:0007669"/>
    <property type="project" value="UniProtKB-UniRule"/>
</dbReference>
<dbReference type="GO" id="GO:0004488">
    <property type="term" value="F:methylenetetrahydrofolate dehydrogenase (NADP+) activity"/>
    <property type="evidence" value="ECO:0007669"/>
    <property type="project" value="UniProtKB-UniRule"/>
</dbReference>
<dbReference type="GO" id="GO:0000105">
    <property type="term" value="P:L-histidine biosynthetic process"/>
    <property type="evidence" value="ECO:0007669"/>
    <property type="project" value="UniProtKB-KW"/>
</dbReference>
<dbReference type="GO" id="GO:0009086">
    <property type="term" value="P:methionine biosynthetic process"/>
    <property type="evidence" value="ECO:0007669"/>
    <property type="project" value="UniProtKB-KW"/>
</dbReference>
<dbReference type="GO" id="GO:0006164">
    <property type="term" value="P:purine nucleotide biosynthetic process"/>
    <property type="evidence" value="ECO:0007669"/>
    <property type="project" value="UniProtKB-KW"/>
</dbReference>
<dbReference type="GO" id="GO:0035999">
    <property type="term" value="P:tetrahydrofolate interconversion"/>
    <property type="evidence" value="ECO:0007669"/>
    <property type="project" value="UniProtKB-UniRule"/>
</dbReference>
<dbReference type="CDD" id="cd01080">
    <property type="entry name" value="NAD_bind_m-THF_DH_Cyclohyd"/>
    <property type="match status" value="1"/>
</dbReference>
<dbReference type="FunFam" id="3.40.50.10860:FF:000001">
    <property type="entry name" value="Bifunctional protein FolD"/>
    <property type="match status" value="1"/>
</dbReference>
<dbReference type="FunFam" id="3.40.50.720:FF:000094">
    <property type="entry name" value="Bifunctional protein FolD"/>
    <property type="match status" value="1"/>
</dbReference>
<dbReference type="Gene3D" id="3.40.50.10860">
    <property type="entry name" value="Leucine Dehydrogenase, chain A, domain 1"/>
    <property type="match status" value="1"/>
</dbReference>
<dbReference type="Gene3D" id="3.40.50.720">
    <property type="entry name" value="NAD(P)-binding Rossmann-like Domain"/>
    <property type="match status" value="1"/>
</dbReference>
<dbReference type="HAMAP" id="MF_01576">
    <property type="entry name" value="THF_DHG_CYH"/>
    <property type="match status" value="1"/>
</dbReference>
<dbReference type="InterPro" id="IPR046346">
    <property type="entry name" value="Aminoacid_DH-like_N_sf"/>
</dbReference>
<dbReference type="InterPro" id="IPR036291">
    <property type="entry name" value="NAD(P)-bd_dom_sf"/>
</dbReference>
<dbReference type="InterPro" id="IPR000672">
    <property type="entry name" value="THF_DH/CycHdrlase"/>
</dbReference>
<dbReference type="InterPro" id="IPR020630">
    <property type="entry name" value="THF_DH/CycHdrlase_cat_dom"/>
</dbReference>
<dbReference type="InterPro" id="IPR020867">
    <property type="entry name" value="THF_DH/CycHdrlase_CS"/>
</dbReference>
<dbReference type="InterPro" id="IPR020631">
    <property type="entry name" value="THF_DH/CycHdrlase_NAD-bd_dom"/>
</dbReference>
<dbReference type="NCBIfam" id="NF008058">
    <property type="entry name" value="PRK10792.1"/>
    <property type="match status" value="1"/>
</dbReference>
<dbReference type="NCBIfam" id="NF010783">
    <property type="entry name" value="PRK14186.1"/>
    <property type="match status" value="1"/>
</dbReference>
<dbReference type="NCBIfam" id="NF010785">
    <property type="entry name" value="PRK14188.1"/>
    <property type="match status" value="1"/>
</dbReference>
<dbReference type="PANTHER" id="PTHR48099:SF5">
    <property type="entry name" value="C-1-TETRAHYDROFOLATE SYNTHASE, CYTOPLASMIC"/>
    <property type="match status" value="1"/>
</dbReference>
<dbReference type="PANTHER" id="PTHR48099">
    <property type="entry name" value="C-1-TETRAHYDROFOLATE SYNTHASE, CYTOPLASMIC-RELATED"/>
    <property type="match status" value="1"/>
</dbReference>
<dbReference type="Pfam" id="PF00763">
    <property type="entry name" value="THF_DHG_CYH"/>
    <property type="match status" value="1"/>
</dbReference>
<dbReference type="Pfam" id="PF02882">
    <property type="entry name" value="THF_DHG_CYH_C"/>
    <property type="match status" value="1"/>
</dbReference>
<dbReference type="PRINTS" id="PR00085">
    <property type="entry name" value="THFDHDRGNASE"/>
</dbReference>
<dbReference type="SUPFAM" id="SSF53223">
    <property type="entry name" value="Aminoacid dehydrogenase-like, N-terminal domain"/>
    <property type="match status" value="1"/>
</dbReference>
<dbReference type="SUPFAM" id="SSF51735">
    <property type="entry name" value="NAD(P)-binding Rossmann-fold domains"/>
    <property type="match status" value="1"/>
</dbReference>
<dbReference type="PROSITE" id="PS00766">
    <property type="entry name" value="THF_DHG_CYH_1"/>
    <property type="match status" value="1"/>
</dbReference>
<dbReference type="PROSITE" id="PS00767">
    <property type="entry name" value="THF_DHG_CYH_2"/>
    <property type="match status" value="1"/>
</dbReference>
<accession>A5GAM5</accession>
<reference key="1">
    <citation type="submission" date="2007-05" db="EMBL/GenBank/DDBJ databases">
        <title>Complete sequence of Geobacter uraniireducens Rf4.</title>
        <authorList>
            <consortium name="US DOE Joint Genome Institute"/>
            <person name="Copeland A."/>
            <person name="Lucas S."/>
            <person name="Lapidus A."/>
            <person name="Barry K."/>
            <person name="Detter J.C."/>
            <person name="Glavina del Rio T."/>
            <person name="Hammon N."/>
            <person name="Israni S."/>
            <person name="Dalin E."/>
            <person name="Tice H."/>
            <person name="Pitluck S."/>
            <person name="Chertkov O."/>
            <person name="Brettin T."/>
            <person name="Bruce D."/>
            <person name="Han C."/>
            <person name="Schmutz J."/>
            <person name="Larimer F."/>
            <person name="Land M."/>
            <person name="Hauser L."/>
            <person name="Kyrpides N."/>
            <person name="Mikhailova N."/>
            <person name="Shelobolina E."/>
            <person name="Aklujkar M."/>
            <person name="Lovley D."/>
            <person name="Richardson P."/>
        </authorList>
    </citation>
    <scope>NUCLEOTIDE SEQUENCE [LARGE SCALE GENOMIC DNA]</scope>
    <source>
        <strain>ATCC BAA-1134 / JCM 13001 / Rf4</strain>
    </source>
</reference>